<proteinExistence type="predicted"/>
<sequence>MVNPDKTSRVYCKYTCCGYVGSLDHDKQDAHVCKLGCQLFYGESCYKEMSNALNGTSRPIFLLSVPAIEVAQLQTLGEMSLKFLIKLIVKMTDCPRQSFSCSELITVLPTVQKLTF</sequence>
<name>YJ76_SCHPO</name>
<reference key="1">
    <citation type="journal article" date="2002" name="Nature">
        <title>The genome sequence of Schizosaccharomyces pombe.</title>
        <authorList>
            <person name="Wood V."/>
            <person name="Gwilliam R."/>
            <person name="Rajandream M.A."/>
            <person name="Lyne M.H."/>
            <person name="Lyne R."/>
            <person name="Stewart A."/>
            <person name="Sgouros J.G."/>
            <person name="Peat N."/>
            <person name="Hayles J."/>
            <person name="Baker S.G."/>
            <person name="Basham D."/>
            <person name="Bowman S."/>
            <person name="Brooks K."/>
            <person name="Brown D."/>
            <person name="Brown S."/>
            <person name="Chillingworth T."/>
            <person name="Churcher C.M."/>
            <person name="Collins M."/>
            <person name="Connor R."/>
            <person name="Cronin A."/>
            <person name="Davis P."/>
            <person name="Feltwell T."/>
            <person name="Fraser A."/>
            <person name="Gentles S."/>
            <person name="Goble A."/>
            <person name="Hamlin N."/>
            <person name="Harris D.E."/>
            <person name="Hidalgo J."/>
            <person name="Hodgson G."/>
            <person name="Holroyd S."/>
            <person name="Hornsby T."/>
            <person name="Howarth S."/>
            <person name="Huckle E.J."/>
            <person name="Hunt S."/>
            <person name="Jagels K."/>
            <person name="James K.D."/>
            <person name="Jones L."/>
            <person name="Jones M."/>
            <person name="Leather S."/>
            <person name="McDonald S."/>
            <person name="McLean J."/>
            <person name="Mooney P."/>
            <person name="Moule S."/>
            <person name="Mungall K.L."/>
            <person name="Murphy L.D."/>
            <person name="Niblett D."/>
            <person name="Odell C."/>
            <person name="Oliver K."/>
            <person name="O'Neil S."/>
            <person name="Pearson D."/>
            <person name="Quail M.A."/>
            <person name="Rabbinowitsch E."/>
            <person name="Rutherford K.M."/>
            <person name="Rutter S."/>
            <person name="Saunders D."/>
            <person name="Seeger K."/>
            <person name="Sharp S."/>
            <person name="Skelton J."/>
            <person name="Simmonds M.N."/>
            <person name="Squares R."/>
            <person name="Squares S."/>
            <person name="Stevens K."/>
            <person name="Taylor K."/>
            <person name="Taylor R.G."/>
            <person name="Tivey A."/>
            <person name="Walsh S.V."/>
            <person name="Warren T."/>
            <person name="Whitehead S."/>
            <person name="Woodward J.R."/>
            <person name="Volckaert G."/>
            <person name="Aert R."/>
            <person name="Robben J."/>
            <person name="Grymonprez B."/>
            <person name="Weltjens I."/>
            <person name="Vanstreels E."/>
            <person name="Rieger M."/>
            <person name="Schaefer M."/>
            <person name="Mueller-Auer S."/>
            <person name="Gabel C."/>
            <person name="Fuchs M."/>
            <person name="Duesterhoeft A."/>
            <person name="Fritzc C."/>
            <person name="Holzer E."/>
            <person name="Moestl D."/>
            <person name="Hilbert H."/>
            <person name="Borzym K."/>
            <person name="Langer I."/>
            <person name="Beck A."/>
            <person name="Lehrach H."/>
            <person name="Reinhardt R."/>
            <person name="Pohl T.M."/>
            <person name="Eger P."/>
            <person name="Zimmermann W."/>
            <person name="Wedler H."/>
            <person name="Wambutt R."/>
            <person name="Purnelle B."/>
            <person name="Goffeau A."/>
            <person name="Cadieu E."/>
            <person name="Dreano S."/>
            <person name="Gloux S."/>
            <person name="Lelaure V."/>
            <person name="Mottier S."/>
            <person name="Galibert F."/>
            <person name="Aves S.J."/>
            <person name="Xiang Z."/>
            <person name="Hunt C."/>
            <person name="Moore K."/>
            <person name="Hurst S.M."/>
            <person name="Lucas M."/>
            <person name="Rochet M."/>
            <person name="Gaillardin C."/>
            <person name="Tallada V.A."/>
            <person name="Garzon A."/>
            <person name="Thode G."/>
            <person name="Daga R.R."/>
            <person name="Cruzado L."/>
            <person name="Jimenez J."/>
            <person name="Sanchez M."/>
            <person name="del Rey F."/>
            <person name="Benito J."/>
            <person name="Dominguez A."/>
            <person name="Revuelta J.L."/>
            <person name="Moreno S."/>
            <person name="Armstrong J."/>
            <person name="Forsburg S.L."/>
            <person name="Cerutti L."/>
            <person name="Lowe T."/>
            <person name="McCombie W.R."/>
            <person name="Paulsen I."/>
            <person name="Potashkin J."/>
            <person name="Shpakovski G.V."/>
            <person name="Ussery D."/>
            <person name="Barrell B.G."/>
            <person name="Nurse P."/>
        </authorList>
    </citation>
    <scope>NUCLEOTIDE SEQUENCE [LARGE SCALE GENOMIC DNA]</scope>
    <source>
        <strain>972 / ATCC 24843</strain>
    </source>
</reference>
<keyword id="KW-1185">Reference proteome</keyword>
<dbReference type="EMBL" id="CU329672">
    <property type="protein sequence ID" value="CAA21231.1"/>
    <property type="molecule type" value="Genomic_DNA"/>
</dbReference>
<dbReference type="PIR" id="T41597">
    <property type="entry name" value="T41597"/>
</dbReference>
<dbReference type="RefSeq" id="NP_587681.1">
    <property type="nucleotide sequence ID" value="NM_001022676.1"/>
</dbReference>
<dbReference type="PaxDb" id="4896-SPCC757.06.1"/>
<dbReference type="EnsemblFungi" id="SPCC757.06.1">
    <property type="protein sequence ID" value="SPCC757.06.1:pep"/>
    <property type="gene ID" value="SPCC757.06"/>
</dbReference>
<dbReference type="KEGG" id="spo:2538727"/>
<dbReference type="PomBase" id="SPCC757.06"/>
<dbReference type="VEuPathDB" id="FungiDB:SPCC757.06"/>
<dbReference type="HOGENOM" id="CLU_2098244_0_0_1"/>
<dbReference type="InParanoid" id="O74917"/>
<dbReference type="PRO" id="PR:O74917"/>
<dbReference type="Proteomes" id="UP000002485">
    <property type="component" value="Chromosome III"/>
</dbReference>
<accession>O74917</accession>
<gene>
    <name type="ORF">SPCC757.06</name>
</gene>
<feature type="chain" id="PRO_0000304057" description="Uncharacterized protein C757.06">
    <location>
        <begin position="1"/>
        <end position="116"/>
    </location>
</feature>
<organism>
    <name type="scientific">Schizosaccharomyces pombe (strain 972 / ATCC 24843)</name>
    <name type="common">Fission yeast</name>
    <dbReference type="NCBI Taxonomy" id="284812"/>
    <lineage>
        <taxon>Eukaryota</taxon>
        <taxon>Fungi</taxon>
        <taxon>Dikarya</taxon>
        <taxon>Ascomycota</taxon>
        <taxon>Taphrinomycotina</taxon>
        <taxon>Schizosaccharomycetes</taxon>
        <taxon>Schizosaccharomycetales</taxon>
        <taxon>Schizosaccharomycetaceae</taxon>
        <taxon>Schizosaccharomyces</taxon>
    </lineage>
</organism>
<protein>
    <recommendedName>
        <fullName>Uncharacterized protein C757.06</fullName>
    </recommendedName>
</protein>